<organism>
    <name type="scientific">Drosophila melanogaster</name>
    <name type="common">Fruit fly</name>
    <dbReference type="NCBI Taxonomy" id="7227"/>
    <lineage>
        <taxon>Eukaryota</taxon>
        <taxon>Metazoa</taxon>
        <taxon>Ecdysozoa</taxon>
        <taxon>Arthropoda</taxon>
        <taxon>Hexapoda</taxon>
        <taxon>Insecta</taxon>
        <taxon>Pterygota</taxon>
        <taxon>Neoptera</taxon>
        <taxon>Endopterygota</taxon>
        <taxon>Diptera</taxon>
        <taxon>Brachycera</taxon>
        <taxon>Muscomorpha</taxon>
        <taxon>Ephydroidea</taxon>
        <taxon>Drosophilidae</taxon>
        <taxon>Drosophila</taxon>
        <taxon>Sophophora</taxon>
    </lineage>
</organism>
<gene>
    <name type="primary">Dlc90F</name>
    <name type="synonym">Tctex</name>
    <name type="ORF">CG12363</name>
</gene>
<dbReference type="EMBL" id="Y08968">
    <property type="protein sequence ID" value="CAA70165.1"/>
    <property type="molecule type" value="mRNA"/>
</dbReference>
<dbReference type="EMBL" id="AF123058">
    <property type="protein sequence ID" value="AAD30033.1"/>
    <property type="molecule type" value="Genomic_DNA"/>
</dbReference>
<dbReference type="EMBL" id="AE014297">
    <property type="protein sequence ID" value="AAF55532.1"/>
    <property type="molecule type" value="Genomic_DNA"/>
</dbReference>
<dbReference type="EMBL" id="AY069608">
    <property type="protein sequence ID" value="AAL39753.1"/>
    <property type="molecule type" value="mRNA"/>
</dbReference>
<dbReference type="RefSeq" id="NP_477356.1">
    <property type="nucleotide sequence ID" value="NM_058008.4"/>
</dbReference>
<dbReference type="PDB" id="1YGT">
    <property type="method" value="X-ray"/>
    <property type="resolution" value="1.70 A"/>
    <property type="chains" value="A=1-111"/>
</dbReference>
<dbReference type="PDB" id="2PG1">
    <property type="method" value="X-ray"/>
    <property type="resolution" value="2.80 A"/>
    <property type="chains" value="E/F/G/H=1-111"/>
</dbReference>
<dbReference type="PDB" id="3FM7">
    <property type="method" value="X-ray"/>
    <property type="resolution" value="3.50 A"/>
    <property type="chains" value="A/B=1-111"/>
</dbReference>
<dbReference type="PDBsum" id="1YGT"/>
<dbReference type="PDBsum" id="2PG1"/>
<dbReference type="PDBsum" id="3FM7"/>
<dbReference type="SMR" id="Q94524"/>
<dbReference type="BioGRID" id="67217">
    <property type="interactions" value="58"/>
</dbReference>
<dbReference type="DIP" id="DIP-17339N"/>
<dbReference type="FunCoup" id="Q94524">
    <property type="interactions" value="773"/>
</dbReference>
<dbReference type="IntAct" id="Q94524">
    <property type="interactions" value="88"/>
</dbReference>
<dbReference type="MINT" id="Q94524"/>
<dbReference type="STRING" id="7227.FBpp0082996"/>
<dbReference type="PaxDb" id="7227-FBpp0082996"/>
<dbReference type="DNASU" id="42199"/>
<dbReference type="EnsemblMetazoa" id="FBtr0083575">
    <property type="protein sequence ID" value="FBpp0082996"/>
    <property type="gene ID" value="FBgn0024432"/>
</dbReference>
<dbReference type="GeneID" id="42199"/>
<dbReference type="KEGG" id="dme:Dmel_CG12363"/>
<dbReference type="AGR" id="FB:FBgn0024432"/>
<dbReference type="CTD" id="42199"/>
<dbReference type="FlyBase" id="FBgn0024432">
    <property type="gene designation" value="Dlc90F"/>
</dbReference>
<dbReference type="VEuPathDB" id="VectorBase:FBgn0024432"/>
<dbReference type="eggNOG" id="KOG4081">
    <property type="taxonomic scope" value="Eukaryota"/>
</dbReference>
<dbReference type="GeneTree" id="ENSGT00940000154531"/>
<dbReference type="HOGENOM" id="CLU_097204_7_2_1"/>
<dbReference type="InParanoid" id="Q94524"/>
<dbReference type="OMA" id="VNQWTSA"/>
<dbReference type="OrthoDB" id="10059120at2759"/>
<dbReference type="PhylomeDB" id="Q94524"/>
<dbReference type="Reactome" id="R-DME-6798695">
    <property type="pathway name" value="Neutrophil degranulation"/>
</dbReference>
<dbReference type="SignaLink" id="Q94524"/>
<dbReference type="BioGRID-ORCS" id="42199">
    <property type="hits" value="1 hit in 3 CRISPR screens"/>
</dbReference>
<dbReference type="EvolutionaryTrace" id="Q94524"/>
<dbReference type="GenomeRNAi" id="42199"/>
<dbReference type="PRO" id="PR:Q94524"/>
<dbReference type="Proteomes" id="UP000000803">
    <property type="component" value="Chromosome 3R"/>
</dbReference>
<dbReference type="Bgee" id="FBgn0024432">
    <property type="expression patterns" value="Expressed in eye disc (Drosophila) and 220 other cell types or tissues"/>
</dbReference>
<dbReference type="ExpressionAtlas" id="Q94524">
    <property type="expression patterns" value="baseline and differential"/>
</dbReference>
<dbReference type="GO" id="GO:1904115">
    <property type="term" value="C:axon cytoplasm"/>
    <property type="evidence" value="ECO:0007669"/>
    <property type="project" value="GOC"/>
</dbReference>
<dbReference type="GO" id="GO:0005737">
    <property type="term" value="C:cytoplasm"/>
    <property type="evidence" value="ECO:0000318"/>
    <property type="project" value="GO_Central"/>
</dbReference>
<dbReference type="GO" id="GO:0005868">
    <property type="term" value="C:cytoplasmic dynein complex"/>
    <property type="evidence" value="ECO:0000250"/>
    <property type="project" value="FlyBase"/>
</dbReference>
<dbReference type="GO" id="GO:0030286">
    <property type="term" value="C:dynein complex"/>
    <property type="evidence" value="ECO:0000314"/>
    <property type="project" value="FlyBase"/>
</dbReference>
<dbReference type="GO" id="GO:0005874">
    <property type="term" value="C:microtubule"/>
    <property type="evidence" value="ECO:0007669"/>
    <property type="project" value="UniProtKB-KW"/>
</dbReference>
<dbReference type="GO" id="GO:0032991">
    <property type="term" value="C:protein-containing complex"/>
    <property type="evidence" value="ECO:0000314"/>
    <property type="project" value="CAFA"/>
</dbReference>
<dbReference type="GO" id="GO:0097718">
    <property type="term" value="F:disordered domain specific binding"/>
    <property type="evidence" value="ECO:0000353"/>
    <property type="project" value="CAFA"/>
</dbReference>
<dbReference type="GO" id="GO:0045505">
    <property type="term" value="F:dynein intermediate chain binding"/>
    <property type="evidence" value="ECO:0000353"/>
    <property type="project" value="FlyBase"/>
</dbReference>
<dbReference type="GO" id="GO:0051959">
    <property type="term" value="F:dynein light intermediate chain binding"/>
    <property type="evidence" value="ECO:0000314"/>
    <property type="project" value="FlyBase"/>
</dbReference>
<dbReference type="GO" id="GO:0042802">
    <property type="term" value="F:identical protein binding"/>
    <property type="evidence" value="ECO:0000353"/>
    <property type="project" value="IntAct"/>
</dbReference>
<dbReference type="GO" id="GO:0042803">
    <property type="term" value="F:protein homodimerization activity"/>
    <property type="evidence" value="ECO:0000314"/>
    <property type="project" value="FlyBase"/>
</dbReference>
<dbReference type="GO" id="GO:0008340">
    <property type="term" value="P:determination of adult lifespan"/>
    <property type="evidence" value="ECO:0000315"/>
    <property type="project" value="FlyBase"/>
</dbReference>
<dbReference type="GO" id="GO:0007018">
    <property type="term" value="P:microtubule-based movement"/>
    <property type="evidence" value="ECO:0000318"/>
    <property type="project" value="GO_Central"/>
</dbReference>
<dbReference type="GO" id="GO:0000278">
    <property type="term" value="P:mitotic cell cycle"/>
    <property type="evidence" value="ECO:0007001"/>
    <property type="project" value="FlyBase"/>
</dbReference>
<dbReference type="GO" id="GO:0008090">
    <property type="term" value="P:retrograde axonal transport"/>
    <property type="evidence" value="ECO:0000315"/>
    <property type="project" value="FlyBase"/>
</dbReference>
<dbReference type="GO" id="GO:0007286">
    <property type="term" value="P:spermatid development"/>
    <property type="evidence" value="ECO:0000315"/>
    <property type="project" value="FlyBase"/>
</dbReference>
<dbReference type="CDD" id="cd21462">
    <property type="entry name" value="DLC-like_DYNLT1"/>
    <property type="match status" value="1"/>
</dbReference>
<dbReference type="FunFam" id="3.30.1140.40:FF:000001">
    <property type="entry name" value="Dynein light chain Tctex-type 1"/>
    <property type="match status" value="1"/>
</dbReference>
<dbReference type="Gene3D" id="3.30.1140.40">
    <property type="entry name" value="Tctex-1"/>
    <property type="match status" value="1"/>
</dbReference>
<dbReference type="IDEAL" id="IID50099"/>
<dbReference type="InterPro" id="IPR005334">
    <property type="entry name" value="Tctex-1-like"/>
</dbReference>
<dbReference type="InterPro" id="IPR038586">
    <property type="entry name" value="Tctex-1-like_sf"/>
</dbReference>
<dbReference type="PANTHER" id="PTHR21255:SF4">
    <property type="entry name" value="DYNEIN LIGHT CHAIN TCTEX-TYPE"/>
    <property type="match status" value="1"/>
</dbReference>
<dbReference type="PANTHER" id="PTHR21255">
    <property type="entry name" value="T-COMPLEX-ASSOCIATED-TESTIS-EXPRESSED 1/ DYNEIN LIGHT CHAIN"/>
    <property type="match status" value="1"/>
</dbReference>
<dbReference type="Pfam" id="PF03645">
    <property type="entry name" value="Tctex-1"/>
    <property type="match status" value="1"/>
</dbReference>
<name>DYLT_DROME</name>
<keyword id="KW-0002">3D-structure</keyword>
<keyword id="KW-0963">Cytoplasm</keyword>
<keyword id="KW-0206">Cytoskeleton</keyword>
<keyword id="KW-0243">Dynein</keyword>
<keyword id="KW-0493">Microtubule</keyword>
<keyword id="KW-0505">Motor protein</keyword>
<keyword id="KW-1185">Reference proteome</keyword>
<comment type="function">
    <text evidence="2">Acts as one of several non-catalytic accessory components of the cytoplasmic dynein complex that are thought to be involved in linking dynein to cargos and to adapter proteins that regulate dynein function. Cytoplasmic dynein acts as a motor for the intracellular retrograde motility of vesicles and organelles along microtubules. Required for spermatid differentiation. Is not required for polarized transport in rhabdomere development and appears to be a non-essential component of the cytoplasmic dynein complex.</text>
</comment>
<comment type="subunit">
    <text evidence="1">The cytoplasmic dynein complex consists of two catalytic heavy chains (HCs) and a number of non-catalytic subunits presented by intermediate chains (ICs), light intermediate chains (LICs) and light chains (LCs).</text>
</comment>
<comment type="interaction">
    <interactant intactId="EBI-158251">
        <id>Q94524</id>
    </interactant>
    <interactant intactId="EBI-158251">
        <id>Q94524</id>
        <label>Dlc90F</label>
    </interactant>
    <organismsDiffer>false</organismsDiffer>
    <experiments>3</experiments>
</comment>
<comment type="interaction">
    <interactant intactId="EBI-158251">
        <id>Q94524</id>
    </interactant>
    <interactant intactId="EBI-155608">
        <id>Q9VH45</id>
        <label>Dmel\CG5359</label>
    </interactant>
    <organismsDiffer>false</organismsDiffer>
    <experiments>4</experiments>
</comment>
<comment type="interaction">
    <interactant intactId="EBI-158251">
        <id>Q94524</id>
    </interactant>
    <interactant intactId="EBI-165408">
        <id>P22979</id>
        <label>Hsp67Bc</label>
    </interactant>
    <organismsDiffer>false</organismsDiffer>
    <experiments>6</experiments>
</comment>
<comment type="interaction">
    <interactant intactId="EBI-158251">
        <id>Q94524</id>
    </interactant>
    <interactant intactId="EBI-121559">
        <id>Q9VIT3</id>
        <label>msb1l</label>
    </interactant>
    <organismsDiffer>false</organismsDiffer>
    <experiments>3</experiments>
</comment>
<comment type="subcellular location">
    <subcellularLocation>
        <location evidence="3">Cytoplasm</location>
        <location evidence="3">Cytoskeleton</location>
    </subcellularLocation>
</comment>
<comment type="disruption phenotype">
    <text evidence="2">Male sterility.</text>
</comment>
<comment type="similarity">
    <text evidence="3">Belongs to the dynein light chain Tctex-type family.</text>
</comment>
<reference key="1">
    <citation type="journal article" date="1999" name="Mol. Gen. Genet.">
        <title>Identification of nuclear genes encoding mitochondrial proteins: isolation of a collection of D. melanogaster cDNAs homologous to sequences in the Human Gene Index database.</title>
        <authorList>
            <person name="Caggese C."/>
            <person name="Ragone G."/>
            <person name="Perrini B."/>
            <person name="Moschetti R."/>
            <person name="de Pinto V."/>
            <person name="Caizzi R."/>
            <person name="Barsanti P."/>
        </authorList>
    </citation>
    <scope>NUCLEOTIDE SEQUENCE [MRNA]</scope>
    <source>
        <tissue>Ovary</tissue>
    </source>
</reference>
<reference key="2">
    <citation type="journal article" date="2001" name="Mol. Genet. Genomics">
        <title>dtctex-1, the Drosophila melanogaster homolog of a putative murine t-complex distorter encoding a dynein light chain, is required for production of functional sperm.</title>
        <authorList>
            <person name="Caggese C."/>
            <person name="Moschetti R."/>
            <person name="Ragone G."/>
            <person name="Barsanti P."/>
            <person name="Caizzi R."/>
        </authorList>
    </citation>
    <scope>NUCLEOTIDE SEQUENCE [GENOMIC DNA]</scope>
</reference>
<reference key="3">
    <citation type="journal article" date="2000" name="Science">
        <title>The genome sequence of Drosophila melanogaster.</title>
        <authorList>
            <person name="Adams M.D."/>
            <person name="Celniker S.E."/>
            <person name="Holt R.A."/>
            <person name="Evans C.A."/>
            <person name="Gocayne J.D."/>
            <person name="Amanatides P.G."/>
            <person name="Scherer S.E."/>
            <person name="Li P.W."/>
            <person name="Hoskins R.A."/>
            <person name="Galle R.F."/>
            <person name="George R.A."/>
            <person name="Lewis S.E."/>
            <person name="Richards S."/>
            <person name="Ashburner M."/>
            <person name="Henderson S.N."/>
            <person name="Sutton G.G."/>
            <person name="Wortman J.R."/>
            <person name="Yandell M.D."/>
            <person name="Zhang Q."/>
            <person name="Chen L.X."/>
            <person name="Brandon R.C."/>
            <person name="Rogers Y.-H.C."/>
            <person name="Blazej R.G."/>
            <person name="Champe M."/>
            <person name="Pfeiffer B.D."/>
            <person name="Wan K.H."/>
            <person name="Doyle C."/>
            <person name="Baxter E.G."/>
            <person name="Helt G."/>
            <person name="Nelson C.R."/>
            <person name="Miklos G.L.G."/>
            <person name="Abril J.F."/>
            <person name="Agbayani A."/>
            <person name="An H.-J."/>
            <person name="Andrews-Pfannkoch C."/>
            <person name="Baldwin D."/>
            <person name="Ballew R.M."/>
            <person name="Basu A."/>
            <person name="Baxendale J."/>
            <person name="Bayraktaroglu L."/>
            <person name="Beasley E.M."/>
            <person name="Beeson K.Y."/>
            <person name="Benos P.V."/>
            <person name="Berman B.P."/>
            <person name="Bhandari D."/>
            <person name="Bolshakov S."/>
            <person name="Borkova D."/>
            <person name="Botchan M.R."/>
            <person name="Bouck J."/>
            <person name="Brokstein P."/>
            <person name="Brottier P."/>
            <person name="Burtis K.C."/>
            <person name="Busam D.A."/>
            <person name="Butler H."/>
            <person name="Cadieu E."/>
            <person name="Center A."/>
            <person name="Chandra I."/>
            <person name="Cherry J.M."/>
            <person name="Cawley S."/>
            <person name="Dahlke C."/>
            <person name="Davenport L.B."/>
            <person name="Davies P."/>
            <person name="de Pablos B."/>
            <person name="Delcher A."/>
            <person name="Deng Z."/>
            <person name="Mays A.D."/>
            <person name="Dew I."/>
            <person name="Dietz S.M."/>
            <person name="Dodson K."/>
            <person name="Doup L.E."/>
            <person name="Downes M."/>
            <person name="Dugan-Rocha S."/>
            <person name="Dunkov B.C."/>
            <person name="Dunn P."/>
            <person name="Durbin K.J."/>
            <person name="Evangelista C.C."/>
            <person name="Ferraz C."/>
            <person name="Ferriera S."/>
            <person name="Fleischmann W."/>
            <person name="Fosler C."/>
            <person name="Gabrielian A.E."/>
            <person name="Garg N.S."/>
            <person name="Gelbart W.M."/>
            <person name="Glasser K."/>
            <person name="Glodek A."/>
            <person name="Gong F."/>
            <person name="Gorrell J.H."/>
            <person name="Gu Z."/>
            <person name="Guan P."/>
            <person name="Harris M."/>
            <person name="Harris N.L."/>
            <person name="Harvey D.A."/>
            <person name="Heiman T.J."/>
            <person name="Hernandez J.R."/>
            <person name="Houck J."/>
            <person name="Hostin D."/>
            <person name="Houston K.A."/>
            <person name="Howland T.J."/>
            <person name="Wei M.-H."/>
            <person name="Ibegwam C."/>
            <person name="Jalali M."/>
            <person name="Kalush F."/>
            <person name="Karpen G.H."/>
            <person name="Ke Z."/>
            <person name="Kennison J.A."/>
            <person name="Ketchum K.A."/>
            <person name="Kimmel B.E."/>
            <person name="Kodira C.D."/>
            <person name="Kraft C.L."/>
            <person name="Kravitz S."/>
            <person name="Kulp D."/>
            <person name="Lai Z."/>
            <person name="Lasko P."/>
            <person name="Lei Y."/>
            <person name="Levitsky A.A."/>
            <person name="Li J.H."/>
            <person name="Li Z."/>
            <person name="Liang Y."/>
            <person name="Lin X."/>
            <person name="Liu X."/>
            <person name="Mattei B."/>
            <person name="McIntosh T.C."/>
            <person name="McLeod M.P."/>
            <person name="McPherson D."/>
            <person name="Merkulov G."/>
            <person name="Milshina N.V."/>
            <person name="Mobarry C."/>
            <person name="Morris J."/>
            <person name="Moshrefi A."/>
            <person name="Mount S.M."/>
            <person name="Moy M."/>
            <person name="Murphy B."/>
            <person name="Murphy L."/>
            <person name="Muzny D.M."/>
            <person name="Nelson D.L."/>
            <person name="Nelson D.R."/>
            <person name="Nelson K.A."/>
            <person name="Nixon K."/>
            <person name="Nusskern D.R."/>
            <person name="Pacleb J.M."/>
            <person name="Palazzolo M."/>
            <person name="Pittman G.S."/>
            <person name="Pan S."/>
            <person name="Pollard J."/>
            <person name="Puri V."/>
            <person name="Reese M.G."/>
            <person name="Reinert K."/>
            <person name="Remington K."/>
            <person name="Saunders R.D.C."/>
            <person name="Scheeler F."/>
            <person name="Shen H."/>
            <person name="Shue B.C."/>
            <person name="Siden-Kiamos I."/>
            <person name="Simpson M."/>
            <person name="Skupski M.P."/>
            <person name="Smith T.J."/>
            <person name="Spier E."/>
            <person name="Spradling A.C."/>
            <person name="Stapleton M."/>
            <person name="Strong R."/>
            <person name="Sun E."/>
            <person name="Svirskas R."/>
            <person name="Tector C."/>
            <person name="Turner R."/>
            <person name="Venter E."/>
            <person name="Wang A.H."/>
            <person name="Wang X."/>
            <person name="Wang Z.-Y."/>
            <person name="Wassarman D.A."/>
            <person name="Weinstock G.M."/>
            <person name="Weissenbach J."/>
            <person name="Williams S.M."/>
            <person name="Woodage T."/>
            <person name="Worley K.C."/>
            <person name="Wu D."/>
            <person name="Yang S."/>
            <person name="Yao Q.A."/>
            <person name="Ye J."/>
            <person name="Yeh R.-F."/>
            <person name="Zaveri J.S."/>
            <person name="Zhan M."/>
            <person name="Zhang G."/>
            <person name="Zhao Q."/>
            <person name="Zheng L."/>
            <person name="Zheng X.H."/>
            <person name="Zhong F.N."/>
            <person name="Zhong W."/>
            <person name="Zhou X."/>
            <person name="Zhu S.C."/>
            <person name="Zhu X."/>
            <person name="Smith H.O."/>
            <person name="Gibbs R.A."/>
            <person name="Myers E.W."/>
            <person name="Rubin G.M."/>
            <person name="Venter J.C."/>
        </authorList>
    </citation>
    <scope>NUCLEOTIDE SEQUENCE [LARGE SCALE GENOMIC DNA]</scope>
    <source>
        <strain>Berkeley</strain>
    </source>
</reference>
<reference key="4">
    <citation type="journal article" date="2002" name="Genome Biol.">
        <title>Annotation of the Drosophila melanogaster euchromatic genome: a systematic review.</title>
        <authorList>
            <person name="Misra S."/>
            <person name="Crosby M.A."/>
            <person name="Mungall C.J."/>
            <person name="Matthews B.B."/>
            <person name="Campbell K.S."/>
            <person name="Hradecky P."/>
            <person name="Huang Y."/>
            <person name="Kaminker J.S."/>
            <person name="Millburn G.H."/>
            <person name="Prochnik S.E."/>
            <person name="Smith C.D."/>
            <person name="Tupy J.L."/>
            <person name="Whitfield E.J."/>
            <person name="Bayraktaroglu L."/>
            <person name="Berman B.P."/>
            <person name="Bettencourt B.R."/>
            <person name="Celniker S.E."/>
            <person name="de Grey A.D.N.J."/>
            <person name="Drysdale R.A."/>
            <person name="Harris N.L."/>
            <person name="Richter J."/>
            <person name="Russo S."/>
            <person name="Schroeder A.J."/>
            <person name="Shu S.Q."/>
            <person name="Stapleton M."/>
            <person name="Yamada C."/>
            <person name="Ashburner M."/>
            <person name="Gelbart W.M."/>
            <person name="Rubin G.M."/>
            <person name="Lewis S.E."/>
        </authorList>
    </citation>
    <scope>GENOME REANNOTATION</scope>
    <source>
        <strain>Berkeley</strain>
    </source>
</reference>
<reference key="5">
    <citation type="submission" date="2003-08" db="EMBL/GenBank/DDBJ databases">
        <authorList>
            <person name="Stapleton M."/>
            <person name="Brokstein P."/>
            <person name="Hong L."/>
            <person name="Agbayani A."/>
            <person name="Carlson J.W."/>
            <person name="Champe M."/>
            <person name="Chavez C."/>
            <person name="Dorsett V."/>
            <person name="Dresnek D."/>
            <person name="Farfan D."/>
            <person name="Frise E."/>
            <person name="George R.A."/>
            <person name="Gonzalez M."/>
            <person name="Guarin H."/>
            <person name="Kronmiller B."/>
            <person name="Li P.W."/>
            <person name="Liao G."/>
            <person name="Miranda A."/>
            <person name="Mungall C.J."/>
            <person name="Nunoo J."/>
            <person name="Pacleb J.M."/>
            <person name="Paragas V."/>
            <person name="Park S."/>
            <person name="Patel S."/>
            <person name="Phouanenavong S."/>
            <person name="Wan K.H."/>
            <person name="Yu C."/>
            <person name="Lewis S.E."/>
            <person name="Rubin G.M."/>
            <person name="Celniker S.E."/>
        </authorList>
    </citation>
    <scope>NUCLEOTIDE SEQUENCE [LARGE SCALE MRNA]</scope>
    <source>
        <strain>Berkeley</strain>
        <tissue>Embryo</tissue>
    </source>
</reference>
<reference key="6">
    <citation type="journal article" date="2004" name="Mol. Biol. Cell">
        <title>The Drosophila tctex-1 light chain is dispensable for essential cytoplasmic dynein functions but is required during spermatid differentiation.</title>
        <authorList>
            <person name="Li M.G."/>
            <person name="Serr M."/>
            <person name="Newman E.A."/>
            <person name="Hays T.S."/>
        </authorList>
    </citation>
    <scope>SUBUNIT</scope>
    <scope>FUNCTION</scope>
    <scope>DISRUPTION PHENOTYPE</scope>
</reference>
<sequence length="111" mass="12479">MDDSREESQFIVDDVSKTIKEAIETTIGGNAYQHDKVNNWTGQVVENCLTVLTKEQKPYKYIVTAMIMQKNGAGLHTASSCYWNNDTDGSCTVRWENKTMYCIVSVFGLAV</sequence>
<accession>Q94524</accession>
<accession>Q9VE95</accession>
<evidence type="ECO:0000250" key="1"/>
<evidence type="ECO:0000269" key="2">
    <source>
    </source>
</evidence>
<evidence type="ECO:0000305" key="3"/>
<evidence type="ECO:0007829" key="4">
    <source>
        <dbReference type="PDB" id="1YGT"/>
    </source>
</evidence>
<evidence type="ECO:0007829" key="5">
    <source>
        <dbReference type="PDB" id="2PG1"/>
    </source>
</evidence>
<evidence type="ECO:0007829" key="6">
    <source>
        <dbReference type="PDB" id="3FM7"/>
    </source>
</evidence>
<protein>
    <recommendedName>
        <fullName>Dynein light chain Tctex-type</fullName>
    </recommendedName>
    <alternativeName>
        <fullName>TCTEX-1 protein homolog</fullName>
    </alternativeName>
</protein>
<proteinExistence type="evidence at protein level"/>
<feature type="chain" id="PRO_0000195155" description="Dynein light chain Tctex-type">
    <location>
        <begin position="1"/>
        <end position="111"/>
    </location>
</feature>
<feature type="helix" evidence="4">
    <location>
        <begin position="14"/>
        <end position="27"/>
    </location>
</feature>
<feature type="helix" evidence="4">
    <location>
        <begin position="34"/>
        <end position="53"/>
    </location>
</feature>
<feature type="turn" evidence="6">
    <location>
        <begin position="54"/>
        <end position="56"/>
    </location>
</feature>
<feature type="strand" evidence="4">
    <location>
        <begin position="58"/>
        <end position="69"/>
    </location>
</feature>
<feature type="strand" evidence="5">
    <location>
        <begin position="75"/>
        <end position="83"/>
    </location>
</feature>
<feature type="turn" evidence="4">
    <location>
        <begin position="85"/>
        <end position="87"/>
    </location>
</feature>
<feature type="strand" evidence="4">
    <location>
        <begin position="89"/>
        <end position="96"/>
    </location>
</feature>
<feature type="strand" evidence="4">
    <location>
        <begin position="98"/>
        <end position="110"/>
    </location>
</feature>